<proteinExistence type="predicted"/>
<sequence>MAIMQINFYSKMLKKNTTILAILPVDKPDKKFQKDVDSENLKTLYLLHGYAGNYMDWLCGARIVELSMRYNVAVFLPSGENSFYLDDEEKEEYFGEFVGNEIIEFTRSVFPIPQKREKTFIGGLSMGGYGALRNGLKYNKNFVGIIALSSALIIHKIAGIPKDYRNAYASYNYYRRVFGDLNSLIGSDKDINALVTKLKQEKGSIPKIYMACGRDDFLVQENRDLFNFLKNEGIDVVYEEDEGGHDWDFWNKYIANAFEWMSKVSD</sequence>
<keyword id="KW-0119">Carbohydrate metabolism</keyword>
<keyword id="KW-0378">Hydrolase</keyword>
<keyword id="KW-0624">Polysaccharide degradation</keyword>
<keyword id="KW-0858">Xylan degradation</keyword>
<reference key="1">
    <citation type="journal article" date="1990" name="Appl. Environ. Microbiol.">
        <title>Cloning, sequence analysis, and expression of genes encoding xylan-degrading enzymes from the thermophile 'Caldocellum saccharolyticum'.</title>
        <authorList>
            <person name="Luethi E."/>
            <person name="Love D.R."/>
            <person name="McAnulty J."/>
            <person name="Wallace C."/>
            <person name="Caughey P.A."/>
            <person name="Saul D.J."/>
            <person name="Bergquist P.L."/>
        </authorList>
    </citation>
    <scope>NUCLEOTIDE SEQUENCE [GENOMIC DNA]</scope>
</reference>
<reference key="2">
    <citation type="submission" date="1997-05" db="EMBL/GenBank/DDBJ databases">
        <title>A cluster of genes involved in xylan degradation cloned from the extreme thermophile Caldicellulosiruptor saccharolyticus.</title>
        <authorList>
            <person name="Te'O V.S. Jr."/>
            <person name="Gibbs M.D."/>
            <person name="Saul D.J."/>
            <person name="Bergquist P.L."/>
        </authorList>
    </citation>
    <scope>NUCLEOTIDE SEQUENCE [GENOMIC DNA]</scope>
</reference>
<dbReference type="EC" id="3.1.-.-"/>
<dbReference type="EMBL" id="M34459">
    <property type="protein sequence ID" value="AAA23060.1"/>
    <property type="molecule type" value="Genomic_DNA"/>
</dbReference>
<dbReference type="EMBL" id="AF005383">
    <property type="protein sequence ID" value="AAB87375.1"/>
    <property type="molecule type" value="Genomic_DNA"/>
</dbReference>
<dbReference type="PIR" id="T30913">
    <property type="entry name" value="T30913"/>
</dbReference>
<dbReference type="SMR" id="P23553"/>
<dbReference type="ESTHER" id="calsa-xync">
    <property type="family name" value="A85-EsteraseD-FGH"/>
</dbReference>
<dbReference type="OMA" id="RPFPNNW"/>
<dbReference type="GO" id="GO:0016747">
    <property type="term" value="F:acyltransferase activity, transferring groups other than amino-acyl groups"/>
    <property type="evidence" value="ECO:0007669"/>
    <property type="project" value="TreeGrafter"/>
</dbReference>
<dbReference type="GO" id="GO:0016787">
    <property type="term" value="F:hydrolase activity"/>
    <property type="evidence" value="ECO:0007669"/>
    <property type="project" value="UniProtKB-KW"/>
</dbReference>
<dbReference type="GO" id="GO:0045493">
    <property type="term" value="P:xylan catabolic process"/>
    <property type="evidence" value="ECO:0007669"/>
    <property type="project" value="UniProtKB-KW"/>
</dbReference>
<dbReference type="Gene3D" id="3.40.50.1820">
    <property type="entry name" value="alpha/beta hydrolase"/>
    <property type="match status" value="1"/>
</dbReference>
<dbReference type="InterPro" id="IPR029058">
    <property type="entry name" value="AB_hydrolase_fold"/>
</dbReference>
<dbReference type="InterPro" id="IPR000801">
    <property type="entry name" value="Esterase-like"/>
</dbReference>
<dbReference type="InterPro" id="IPR050583">
    <property type="entry name" value="Mycobacterial_A85_antigen"/>
</dbReference>
<dbReference type="PANTHER" id="PTHR48098:SF1">
    <property type="entry name" value="DIACYLGLYCEROL ACYLTRANSFERASE_MYCOLYLTRANSFERASE AG85A"/>
    <property type="match status" value="1"/>
</dbReference>
<dbReference type="PANTHER" id="PTHR48098">
    <property type="entry name" value="ENTEROCHELIN ESTERASE-RELATED"/>
    <property type="match status" value="1"/>
</dbReference>
<dbReference type="Pfam" id="PF00756">
    <property type="entry name" value="Esterase"/>
    <property type="match status" value="1"/>
</dbReference>
<dbReference type="SUPFAM" id="SSF53474">
    <property type="entry name" value="alpha/beta-Hydrolases"/>
    <property type="match status" value="1"/>
</dbReference>
<name>XYNC_CALSA</name>
<gene>
    <name type="primary">xynC</name>
</gene>
<accession>P23553</accession>
<organism>
    <name type="scientific">Caldicellulosiruptor saccharolyticus</name>
    <name type="common">Caldocellum saccharolyticum</name>
    <dbReference type="NCBI Taxonomy" id="44001"/>
    <lineage>
        <taxon>Bacteria</taxon>
        <taxon>Bacillati</taxon>
        <taxon>Bacillota</taxon>
        <taxon>Bacillota incertae sedis</taxon>
        <taxon>Caldicellulosiruptorales</taxon>
        <taxon>Caldicellulosiruptoraceae</taxon>
        <taxon>Caldicellulosiruptor</taxon>
    </lineage>
</organism>
<protein>
    <recommendedName>
        <fullName>Acetyl esterase</fullName>
        <ecNumber>3.1.-.-</ecNumber>
    </recommendedName>
    <alternativeName>
        <fullName>Acetylxylosidase</fullName>
    </alternativeName>
</protein>
<feature type="chain" id="PRO_0000066057" description="Acetyl esterase">
    <location>
        <begin position="1"/>
        <end position="266"/>
    </location>
</feature>